<keyword id="KW-0067">ATP-binding</keyword>
<keyword id="KW-0997">Cell inner membrane</keyword>
<keyword id="KW-1003">Cell membrane</keyword>
<keyword id="KW-0378">Hydrolase</keyword>
<keyword id="KW-0418">Kinase</keyword>
<keyword id="KW-0472">Membrane</keyword>
<keyword id="KW-0547">Nucleotide-binding</keyword>
<keyword id="KW-0597">Phosphoprotein</keyword>
<keyword id="KW-0904">Protein phosphatase</keyword>
<keyword id="KW-0808">Transferase</keyword>
<keyword id="KW-0812">Transmembrane</keyword>
<keyword id="KW-1133">Transmembrane helix</keyword>
<keyword id="KW-0902">Two-component regulatory system</keyword>
<accession>Q7MD16</accession>
<name>LUXQ_VIBVY</name>
<evidence type="ECO:0000250" key="1"/>
<evidence type="ECO:0000255" key="2"/>
<evidence type="ECO:0000255" key="3">
    <source>
        <dbReference type="PROSITE-ProRule" id="PRU00107"/>
    </source>
</evidence>
<evidence type="ECO:0000255" key="4">
    <source>
        <dbReference type="PROSITE-ProRule" id="PRU00169"/>
    </source>
</evidence>
<evidence type="ECO:0000305" key="5"/>
<sequence length="857" mass="96743">MTNEQLQRKHQSLATLITRIIFLVLGLITIGIFIQSYYFSNKIIKQEVMLTKQQTSALVKSLFNNHLSILQIHHDSNSKNEAIRRFFLDGDDEKLEYYFLSMDQADPTHTPEFRFLTTGEGLLWDDGNAHFYGVNEVLLEKISQSVLFGNNWHFMSLHTLMGLRNMLVRRSPVIDTTTGEVLGQYYISVVLDNNFPLVEMLESGSNSDNIVMLVGDKVISHSLSGNEPYDLDSLLAMRDEPSAFDDCLISHTPIEINSTDTLVSILAIQENSHVASLQRQHYLGLATSVVLMLMLSLAIRSWIQNRVANALESLMAYSRFAGTGEKYERFNGSDILEFAHIGHTLENTFEQLESQRRSFQDLFNFALSPMMVWSESGLLIQMNPAAMKELGIEHASPQDFSNPLFQLFKLKLSPHLKMAAQGATLTGINVPIGEKIFRWNLSPIVVENGISGIIVQGQDITTLIDAEKQSNLARREAEQSAKTRADFLAKMSHEIRTPLNGILGIAQLLKRSVNDAENLKQVDVLCNSGEHLLAVLNDILDFSKIEQGKFNIKKRDFNFYDTLNTLENIYRPICREKGVSFEIHNQIPLDCQLHTDQVRLNQIMFNLISNAVKFTPAGRIEVSFKLEQFARSEHSILSIQVSDTGIGIDESKLESIFEPFVQADSLSTREYGGSGLGLTIVKNLVEMLEGEISVQSELCKGSTFYLSIPVEKGECEEQKTPTNPKPEQLFGQGLKVLLVEDNHTNAFILKAFCQKYQMSVEWVQDGTQALEKLKEHAFDLILMDNQLPKMGGIEATREIRETLKLGTPIYACTADAQESTKQEFLSAGANRVIVKPIKEQELHDELLHFKAHYWVEH</sequence>
<comment type="function">
    <text evidence="1">At low cell density, in absence of autoinducer has a kinase activity, and autophosphorylates on a histidine residue. The phosphoryl group is then transferred to an aspartate residue in the response regulator domain. The phosphoryl group is transferred to LuxU, and ultimately to LuxO. At high cell density, in the presence of autoinducer, the kinase activity is inactivated, and the response regulator domain has a phosphatase activity (By similarity).</text>
</comment>
<comment type="catalytic activity">
    <reaction>
        <text>ATP + protein L-histidine = ADP + protein N-phospho-L-histidine.</text>
        <dbReference type="EC" id="2.7.13.3"/>
    </reaction>
</comment>
<comment type="subunit">
    <text evidence="1">Binds the complex formed by the autoinducer and LuxP.</text>
</comment>
<comment type="subcellular location">
    <subcellularLocation>
        <location evidence="5">Cell inner membrane</location>
        <topology evidence="5">Multi-pass membrane protein</topology>
    </subcellularLocation>
</comment>
<proteinExistence type="inferred from homology"/>
<dbReference type="EC" id="2.7.13.3"/>
<dbReference type="EC" id="3.1.3.-"/>
<dbReference type="EMBL" id="BA000038">
    <property type="protein sequence ID" value="BAC97246.1"/>
    <property type="molecule type" value="Genomic_DNA"/>
</dbReference>
<dbReference type="RefSeq" id="WP_011152473.1">
    <property type="nucleotide sequence ID" value="NC_005140.1"/>
</dbReference>
<dbReference type="SMR" id="Q7MD16"/>
<dbReference type="STRING" id="672.VV93_v1c41460"/>
<dbReference type="KEGG" id="vvy:VVA1220"/>
<dbReference type="PATRIC" id="fig|196600.6.peg.4375"/>
<dbReference type="eggNOG" id="COG0784">
    <property type="taxonomic scope" value="Bacteria"/>
</dbReference>
<dbReference type="eggNOG" id="COG2205">
    <property type="taxonomic scope" value="Bacteria"/>
</dbReference>
<dbReference type="HOGENOM" id="CLU_000445_74_1_6"/>
<dbReference type="Proteomes" id="UP000002675">
    <property type="component" value="Chromosome II"/>
</dbReference>
<dbReference type="GO" id="GO:0005886">
    <property type="term" value="C:plasma membrane"/>
    <property type="evidence" value="ECO:0007669"/>
    <property type="project" value="UniProtKB-SubCell"/>
</dbReference>
<dbReference type="GO" id="GO:0005524">
    <property type="term" value="F:ATP binding"/>
    <property type="evidence" value="ECO:0007669"/>
    <property type="project" value="UniProtKB-KW"/>
</dbReference>
<dbReference type="GO" id="GO:0009927">
    <property type="term" value="F:histidine phosphotransfer kinase activity"/>
    <property type="evidence" value="ECO:0007669"/>
    <property type="project" value="TreeGrafter"/>
</dbReference>
<dbReference type="GO" id="GO:0004721">
    <property type="term" value="F:phosphoprotein phosphatase activity"/>
    <property type="evidence" value="ECO:0007669"/>
    <property type="project" value="UniProtKB-KW"/>
</dbReference>
<dbReference type="GO" id="GO:0000155">
    <property type="term" value="F:phosphorelay sensor kinase activity"/>
    <property type="evidence" value="ECO:0007669"/>
    <property type="project" value="InterPro"/>
</dbReference>
<dbReference type="CDD" id="cd16922">
    <property type="entry name" value="HATPase_EvgS-ArcB-TorS-like"/>
    <property type="match status" value="1"/>
</dbReference>
<dbReference type="CDD" id="cd00082">
    <property type="entry name" value="HisKA"/>
    <property type="match status" value="1"/>
</dbReference>
<dbReference type="CDD" id="cd17546">
    <property type="entry name" value="REC_hyHK_CKI1_RcsC-like"/>
    <property type="match status" value="1"/>
</dbReference>
<dbReference type="FunFam" id="1.10.287.130:FF:000091">
    <property type="entry name" value="Autoinducer 2 sensor kinase/phosphatase LuxQ"/>
    <property type="match status" value="1"/>
</dbReference>
<dbReference type="FunFam" id="3.40.50.2300:FF:000322">
    <property type="entry name" value="Autoinducer 2 sensor kinase/phosphatase luxQ"/>
    <property type="match status" value="1"/>
</dbReference>
<dbReference type="FunFam" id="3.30.565.10:FF:000010">
    <property type="entry name" value="Sensor histidine kinase RcsC"/>
    <property type="match status" value="1"/>
</dbReference>
<dbReference type="Gene3D" id="1.10.287.130">
    <property type="match status" value="1"/>
</dbReference>
<dbReference type="Gene3D" id="3.40.50.2300">
    <property type="match status" value="1"/>
</dbReference>
<dbReference type="Gene3D" id="3.30.565.10">
    <property type="entry name" value="Histidine kinase-like ATPase, C-terminal domain"/>
    <property type="match status" value="1"/>
</dbReference>
<dbReference type="Gene3D" id="2.20.20.100">
    <property type="entry name" value="LuxQ periplasmic domain, C-terminal subdomain"/>
    <property type="match status" value="1"/>
</dbReference>
<dbReference type="Gene3D" id="3.30.450.220">
    <property type="entry name" value="LuxQ periplasmic domain, N-terminal subdomain"/>
    <property type="match status" value="1"/>
</dbReference>
<dbReference type="Gene3D" id="3.30.450.20">
    <property type="entry name" value="PAS domain"/>
    <property type="match status" value="1"/>
</dbReference>
<dbReference type="InterPro" id="IPR053413">
    <property type="entry name" value="AI-2_sensor_kinase/phosphatase"/>
</dbReference>
<dbReference type="InterPro" id="IPR011006">
    <property type="entry name" value="CheY-like_superfamily"/>
</dbReference>
<dbReference type="InterPro" id="IPR036890">
    <property type="entry name" value="HATPase_C_sf"/>
</dbReference>
<dbReference type="InterPro" id="IPR005467">
    <property type="entry name" value="His_kinase_dom"/>
</dbReference>
<dbReference type="InterPro" id="IPR003661">
    <property type="entry name" value="HisK_dim/P_dom"/>
</dbReference>
<dbReference type="InterPro" id="IPR036097">
    <property type="entry name" value="HisK_dim/P_sf"/>
</dbReference>
<dbReference type="InterPro" id="IPR015387">
    <property type="entry name" value="LuxQ-periplasm_dom"/>
</dbReference>
<dbReference type="InterPro" id="IPR043056">
    <property type="entry name" value="LuxQ-periplasm_N"/>
</dbReference>
<dbReference type="InterPro" id="IPR035965">
    <property type="entry name" value="PAS-like_dom_sf"/>
</dbReference>
<dbReference type="InterPro" id="IPR029151">
    <property type="entry name" value="Sensor-like_sf"/>
</dbReference>
<dbReference type="InterPro" id="IPR004358">
    <property type="entry name" value="Sig_transdc_His_kin-like_C"/>
</dbReference>
<dbReference type="InterPro" id="IPR001789">
    <property type="entry name" value="Sig_transdc_resp-reg_receiver"/>
</dbReference>
<dbReference type="NCBIfam" id="NF041947">
    <property type="entry name" value="LuxQ_Vibrio"/>
    <property type="match status" value="1"/>
</dbReference>
<dbReference type="PANTHER" id="PTHR43047:SF72">
    <property type="entry name" value="OSMOSENSING HISTIDINE PROTEIN KINASE SLN1"/>
    <property type="match status" value="1"/>
</dbReference>
<dbReference type="PANTHER" id="PTHR43047">
    <property type="entry name" value="TWO-COMPONENT HISTIDINE PROTEIN KINASE"/>
    <property type="match status" value="1"/>
</dbReference>
<dbReference type="Pfam" id="PF02518">
    <property type="entry name" value="HATPase_c"/>
    <property type="match status" value="1"/>
</dbReference>
<dbReference type="Pfam" id="PF00512">
    <property type="entry name" value="HisKA"/>
    <property type="match status" value="1"/>
</dbReference>
<dbReference type="Pfam" id="PF09308">
    <property type="entry name" value="LuxQ-periplasm"/>
    <property type="match status" value="1"/>
</dbReference>
<dbReference type="Pfam" id="PF00072">
    <property type="entry name" value="Response_reg"/>
    <property type="match status" value="1"/>
</dbReference>
<dbReference type="PRINTS" id="PR00344">
    <property type="entry name" value="BCTRLSENSOR"/>
</dbReference>
<dbReference type="SMART" id="SM00387">
    <property type="entry name" value="HATPase_c"/>
    <property type="match status" value="1"/>
</dbReference>
<dbReference type="SMART" id="SM00388">
    <property type="entry name" value="HisKA"/>
    <property type="match status" value="1"/>
</dbReference>
<dbReference type="SMART" id="SM00448">
    <property type="entry name" value="REC"/>
    <property type="match status" value="1"/>
</dbReference>
<dbReference type="SUPFAM" id="SSF55874">
    <property type="entry name" value="ATPase domain of HSP90 chaperone/DNA topoisomerase II/histidine kinase"/>
    <property type="match status" value="1"/>
</dbReference>
<dbReference type="SUPFAM" id="SSF52172">
    <property type="entry name" value="CheY-like"/>
    <property type="match status" value="1"/>
</dbReference>
<dbReference type="SUPFAM" id="SSF47384">
    <property type="entry name" value="Homodimeric domain of signal transducing histidine kinase"/>
    <property type="match status" value="1"/>
</dbReference>
<dbReference type="SUPFAM" id="SSF55785">
    <property type="entry name" value="PYP-like sensor domain (PAS domain)"/>
    <property type="match status" value="1"/>
</dbReference>
<dbReference type="SUPFAM" id="SSF103190">
    <property type="entry name" value="Sensory domain-like"/>
    <property type="match status" value="1"/>
</dbReference>
<dbReference type="PROSITE" id="PS50109">
    <property type="entry name" value="HIS_KIN"/>
    <property type="match status" value="1"/>
</dbReference>
<dbReference type="PROSITE" id="PS50110">
    <property type="entry name" value="RESPONSE_REGULATORY"/>
    <property type="match status" value="1"/>
</dbReference>
<protein>
    <recommendedName>
        <fullName>Autoinducer 2 sensor kinase/phosphatase LuxQ</fullName>
        <ecNumber>2.7.13.3</ecNumber>
        <ecNumber>3.1.3.-</ecNumber>
    </recommendedName>
</protein>
<gene>
    <name type="primary">luxQ</name>
    <name type="ordered locus">VVA1220</name>
</gene>
<organism>
    <name type="scientific">Vibrio vulnificus (strain YJ016)</name>
    <dbReference type="NCBI Taxonomy" id="196600"/>
    <lineage>
        <taxon>Bacteria</taxon>
        <taxon>Pseudomonadati</taxon>
        <taxon>Pseudomonadota</taxon>
        <taxon>Gammaproteobacteria</taxon>
        <taxon>Vibrionales</taxon>
        <taxon>Vibrionaceae</taxon>
        <taxon>Vibrio</taxon>
    </lineage>
</organism>
<feature type="chain" id="PRO_0000074786" description="Autoinducer 2 sensor kinase/phosphatase LuxQ">
    <location>
        <begin position="1"/>
        <end position="857"/>
    </location>
</feature>
<feature type="transmembrane region" description="Helical" evidence="2">
    <location>
        <begin position="20"/>
        <end position="40"/>
    </location>
</feature>
<feature type="transmembrane region" description="Helical" evidence="2">
    <location>
        <begin position="283"/>
        <end position="303"/>
    </location>
</feature>
<feature type="domain" description="Histidine kinase" evidence="3">
    <location>
        <begin position="490"/>
        <end position="712"/>
    </location>
</feature>
<feature type="domain" description="Response regulatory" evidence="4">
    <location>
        <begin position="735"/>
        <end position="850"/>
    </location>
</feature>
<feature type="modified residue" description="Phosphohistidine; by autocatalysis" evidence="3">
    <location>
        <position position="493"/>
    </location>
</feature>
<feature type="modified residue" description="4-aspartylphosphate" evidence="4">
    <location>
        <position position="784"/>
    </location>
</feature>
<reference key="1">
    <citation type="journal article" date="2003" name="Genome Res.">
        <title>Comparative genome analysis of Vibrio vulnificus, a marine pathogen.</title>
        <authorList>
            <person name="Chen C.-Y."/>
            <person name="Wu K.-M."/>
            <person name="Chang Y.-C."/>
            <person name="Chang C.-H."/>
            <person name="Tsai H.-C."/>
            <person name="Liao T.-L."/>
            <person name="Liu Y.-M."/>
            <person name="Chen H.-J."/>
            <person name="Shen A.B.-T."/>
            <person name="Li J.-C."/>
            <person name="Su T.-L."/>
            <person name="Shao C.-P."/>
            <person name="Lee C.-T."/>
            <person name="Hor L.-I."/>
            <person name="Tsai S.-F."/>
        </authorList>
    </citation>
    <scope>NUCLEOTIDE SEQUENCE [LARGE SCALE GENOMIC DNA]</scope>
    <source>
        <strain>YJ016</strain>
    </source>
</reference>